<feature type="chain" id="PRO_0000362560" description="ATP synthase subunit a, chloroplastic">
    <location>
        <begin position="1"/>
        <end position="247"/>
    </location>
</feature>
<feature type="transmembrane region" description="Helical" evidence="1">
    <location>
        <begin position="38"/>
        <end position="58"/>
    </location>
</feature>
<feature type="transmembrane region" description="Helical" evidence="1">
    <location>
        <begin position="95"/>
        <end position="115"/>
    </location>
</feature>
<feature type="transmembrane region" description="Helical" evidence="1">
    <location>
        <begin position="134"/>
        <end position="154"/>
    </location>
</feature>
<feature type="transmembrane region" description="Helical" evidence="1">
    <location>
        <begin position="199"/>
        <end position="219"/>
    </location>
</feature>
<feature type="transmembrane region" description="Helical" evidence="1">
    <location>
        <begin position="220"/>
        <end position="240"/>
    </location>
</feature>
<organism>
    <name type="scientific">Helianthus annuus</name>
    <name type="common">Common sunflower</name>
    <dbReference type="NCBI Taxonomy" id="4232"/>
    <lineage>
        <taxon>Eukaryota</taxon>
        <taxon>Viridiplantae</taxon>
        <taxon>Streptophyta</taxon>
        <taxon>Embryophyta</taxon>
        <taxon>Tracheophyta</taxon>
        <taxon>Spermatophyta</taxon>
        <taxon>Magnoliopsida</taxon>
        <taxon>eudicotyledons</taxon>
        <taxon>Gunneridae</taxon>
        <taxon>Pentapetalae</taxon>
        <taxon>asterids</taxon>
        <taxon>campanulids</taxon>
        <taxon>Asterales</taxon>
        <taxon>Asteraceae</taxon>
        <taxon>Asteroideae</taxon>
        <taxon>Heliantheae alliance</taxon>
        <taxon>Heliantheae</taxon>
        <taxon>Helianthus</taxon>
    </lineage>
</organism>
<accession>Q1KXW8</accession>
<reference key="1">
    <citation type="submission" date="2006-01" db="EMBL/GenBank/DDBJ databases">
        <title>A comparison of the first two published chloroplast genomes in Asteraceae: Lactuca and Helianthus.</title>
        <authorList>
            <person name="Timme R.E."/>
            <person name="Kuehl J.V."/>
            <person name="Boore J.L."/>
            <person name="Jansen R.K."/>
        </authorList>
    </citation>
    <scope>NUCLEOTIDE SEQUENCE [LARGE SCALE GENOMIC DNA]</scope>
    <source>
        <strain>cv. HA383</strain>
    </source>
</reference>
<evidence type="ECO:0000255" key="1">
    <source>
        <dbReference type="HAMAP-Rule" id="MF_01393"/>
    </source>
</evidence>
<name>ATPI_HELAN</name>
<gene>
    <name evidence="1" type="primary">atpI</name>
</gene>
<proteinExistence type="inferred from homology"/>
<sequence>MNVLSCSINTLNGLYDLSGVEVGQHFYWKIGGFQVHGQVLITSWVVIAILLGSAALAVRNPQTIPTGGQNFFEYVLEFIRDVSKTQIGEEYGPWVPFIGTMFLFIFVSNWSGALLPWKIIQLPHGELAAPTNDINTTVALALLTSVAYFYAGLTKKGLSYFGKYIQPTPILLPINILEDFTKPLSLSFRLFGNILADELVVVVLVSLVPSVVPIPVMFLGLFTSGIQALIFATLAAAYIGESMEGHH</sequence>
<dbReference type="EMBL" id="DQ383815">
    <property type="protein sequence ID" value="ABD47137.1"/>
    <property type="molecule type" value="Genomic_DNA"/>
</dbReference>
<dbReference type="RefSeq" id="YP_588108.1">
    <property type="nucleotide sequence ID" value="NC_007977.1"/>
</dbReference>
<dbReference type="SMR" id="Q1KXW8"/>
<dbReference type="GeneID" id="4055576"/>
<dbReference type="KEGG" id="han:4055576"/>
<dbReference type="OrthoDB" id="2303at2759"/>
<dbReference type="PhylomeDB" id="Q1KXW8"/>
<dbReference type="GO" id="GO:0009535">
    <property type="term" value="C:chloroplast thylakoid membrane"/>
    <property type="evidence" value="ECO:0007669"/>
    <property type="project" value="UniProtKB-SubCell"/>
</dbReference>
<dbReference type="GO" id="GO:0005886">
    <property type="term" value="C:plasma membrane"/>
    <property type="evidence" value="ECO:0007669"/>
    <property type="project" value="UniProtKB-UniRule"/>
</dbReference>
<dbReference type="GO" id="GO:0045259">
    <property type="term" value="C:proton-transporting ATP synthase complex"/>
    <property type="evidence" value="ECO:0007669"/>
    <property type="project" value="UniProtKB-KW"/>
</dbReference>
<dbReference type="GO" id="GO:0046933">
    <property type="term" value="F:proton-transporting ATP synthase activity, rotational mechanism"/>
    <property type="evidence" value="ECO:0007669"/>
    <property type="project" value="UniProtKB-UniRule"/>
</dbReference>
<dbReference type="CDD" id="cd00310">
    <property type="entry name" value="ATP-synt_Fo_a_6"/>
    <property type="match status" value="1"/>
</dbReference>
<dbReference type="FunFam" id="1.20.120.220:FF:000001">
    <property type="entry name" value="ATP synthase subunit a, chloroplastic"/>
    <property type="match status" value="1"/>
</dbReference>
<dbReference type="Gene3D" id="1.20.120.220">
    <property type="entry name" value="ATP synthase, F0 complex, subunit A"/>
    <property type="match status" value="1"/>
</dbReference>
<dbReference type="HAMAP" id="MF_01393">
    <property type="entry name" value="ATP_synth_a_bact"/>
    <property type="match status" value="1"/>
</dbReference>
<dbReference type="InterPro" id="IPR045082">
    <property type="entry name" value="ATP_syn_F0_a_bact/chloroplast"/>
</dbReference>
<dbReference type="InterPro" id="IPR000568">
    <property type="entry name" value="ATP_synth_F0_asu"/>
</dbReference>
<dbReference type="InterPro" id="IPR023011">
    <property type="entry name" value="ATP_synth_F0_asu_AS"/>
</dbReference>
<dbReference type="InterPro" id="IPR035908">
    <property type="entry name" value="F0_ATP_A_sf"/>
</dbReference>
<dbReference type="NCBIfam" id="TIGR01131">
    <property type="entry name" value="ATP_synt_6_or_A"/>
    <property type="match status" value="1"/>
</dbReference>
<dbReference type="PANTHER" id="PTHR42823">
    <property type="entry name" value="ATP SYNTHASE SUBUNIT A, CHLOROPLASTIC"/>
    <property type="match status" value="1"/>
</dbReference>
<dbReference type="PANTHER" id="PTHR42823:SF3">
    <property type="entry name" value="ATP SYNTHASE SUBUNIT A, CHLOROPLASTIC"/>
    <property type="match status" value="1"/>
</dbReference>
<dbReference type="Pfam" id="PF00119">
    <property type="entry name" value="ATP-synt_A"/>
    <property type="match status" value="1"/>
</dbReference>
<dbReference type="PRINTS" id="PR00123">
    <property type="entry name" value="ATPASEA"/>
</dbReference>
<dbReference type="SUPFAM" id="SSF81336">
    <property type="entry name" value="F1F0 ATP synthase subunit A"/>
    <property type="match status" value="1"/>
</dbReference>
<dbReference type="PROSITE" id="PS00449">
    <property type="entry name" value="ATPASE_A"/>
    <property type="match status" value="1"/>
</dbReference>
<keyword id="KW-0066">ATP synthesis</keyword>
<keyword id="KW-0138">CF(0)</keyword>
<keyword id="KW-0150">Chloroplast</keyword>
<keyword id="KW-0375">Hydrogen ion transport</keyword>
<keyword id="KW-0406">Ion transport</keyword>
<keyword id="KW-0472">Membrane</keyword>
<keyword id="KW-0934">Plastid</keyword>
<keyword id="KW-0793">Thylakoid</keyword>
<keyword id="KW-0812">Transmembrane</keyword>
<keyword id="KW-1133">Transmembrane helix</keyword>
<keyword id="KW-0813">Transport</keyword>
<geneLocation type="chloroplast"/>
<protein>
    <recommendedName>
        <fullName evidence="1">ATP synthase subunit a, chloroplastic</fullName>
    </recommendedName>
    <alternativeName>
        <fullName evidence="1">ATP synthase F0 sector subunit a</fullName>
    </alternativeName>
    <alternativeName>
        <fullName evidence="1">F-ATPase subunit IV</fullName>
    </alternativeName>
</protein>
<comment type="function">
    <text evidence="1">Key component of the proton channel; it plays a direct role in the translocation of protons across the membrane.</text>
</comment>
<comment type="subunit">
    <text evidence="1">F-type ATPases have 2 components, CF(1) - the catalytic core - and CF(0) - the membrane proton channel. CF(1) has five subunits: alpha(3), beta(3), gamma(1), delta(1), epsilon(1). CF(0) has four main subunits: a, b, b' and c.</text>
</comment>
<comment type="subcellular location">
    <subcellularLocation>
        <location evidence="1">Plastid</location>
        <location evidence="1">Chloroplast thylakoid membrane</location>
        <topology evidence="1">Multi-pass membrane protein</topology>
    </subcellularLocation>
</comment>
<comment type="similarity">
    <text evidence="1">Belongs to the ATPase A chain family.</text>
</comment>